<evidence type="ECO:0000250" key="1"/>
<evidence type="ECO:0000255" key="2">
    <source>
        <dbReference type="HAMAP-Rule" id="MF_01057"/>
    </source>
</evidence>
<organism>
    <name type="scientific">Streptococcus pneumoniae (strain CGSP14)</name>
    <dbReference type="NCBI Taxonomy" id="516950"/>
    <lineage>
        <taxon>Bacteria</taxon>
        <taxon>Bacillati</taxon>
        <taxon>Bacillota</taxon>
        <taxon>Bacilli</taxon>
        <taxon>Lactobacillales</taxon>
        <taxon>Streptococcaceae</taxon>
        <taxon>Streptococcus</taxon>
    </lineage>
</organism>
<proteinExistence type="inferred from homology"/>
<sequence>MRVRNRKGATELLEANPQYVVLNFLEAKAKWRDLFGNDNPIHVEVGSGKGAFVSGMAKQNPDINYIGIDIQKSVLSYALDKVLEAGVSNIKLLWVDGSDLTDYFEDGEIDRLYLNFSDPWPKKRHEKRRLTYKTFLDTFKRILPENGEIHFKTDNRGLFEYSLVSFSQYGMKLNGVWLDLHASDFEGNVMTEYEQKFSNKGQVIYRVEAEF</sequence>
<protein>
    <recommendedName>
        <fullName evidence="2">tRNA (guanine-N(7)-)-methyltransferase</fullName>
        <ecNumber evidence="2">2.1.1.33</ecNumber>
    </recommendedName>
    <alternativeName>
        <fullName evidence="2">tRNA (guanine(46)-N(7))-methyltransferase</fullName>
    </alternativeName>
    <alternativeName>
        <fullName evidence="2">tRNA(m7G46)-methyltransferase</fullName>
    </alternativeName>
</protein>
<dbReference type="EC" id="2.1.1.33" evidence="2"/>
<dbReference type="EMBL" id="CP001033">
    <property type="protein sequence ID" value="ACB89766.1"/>
    <property type="molecule type" value="Genomic_DNA"/>
</dbReference>
<dbReference type="RefSeq" id="WP_001266075.1">
    <property type="nucleotide sequence ID" value="NC_010582.1"/>
</dbReference>
<dbReference type="SMR" id="B2IMD9"/>
<dbReference type="KEGG" id="spw:SPCG_0514"/>
<dbReference type="HOGENOM" id="CLU_050910_2_1_9"/>
<dbReference type="UniPathway" id="UPA00989"/>
<dbReference type="GO" id="GO:0043527">
    <property type="term" value="C:tRNA methyltransferase complex"/>
    <property type="evidence" value="ECO:0007669"/>
    <property type="project" value="TreeGrafter"/>
</dbReference>
<dbReference type="GO" id="GO:0008176">
    <property type="term" value="F:tRNA (guanine(46)-N7)-methyltransferase activity"/>
    <property type="evidence" value="ECO:0007669"/>
    <property type="project" value="UniProtKB-UniRule"/>
</dbReference>
<dbReference type="CDD" id="cd02440">
    <property type="entry name" value="AdoMet_MTases"/>
    <property type="match status" value="1"/>
</dbReference>
<dbReference type="FunFam" id="3.40.50.150:FF:000035">
    <property type="entry name" value="tRNA (guanine-N(7)-)-methyltransferase"/>
    <property type="match status" value="1"/>
</dbReference>
<dbReference type="Gene3D" id="3.40.50.150">
    <property type="entry name" value="Vaccinia Virus protein VP39"/>
    <property type="match status" value="1"/>
</dbReference>
<dbReference type="HAMAP" id="MF_01057">
    <property type="entry name" value="tRNA_methyltr_TrmB"/>
    <property type="match status" value="1"/>
</dbReference>
<dbReference type="InterPro" id="IPR029063">
    <property type="entry name" value="SAM-dependent_MTases_sf"/>
</dbReference>
<dbReference type="InterPro" id="IPR003358">
    <property type="entry name" value="tRNA_(Gua-N-7)_MeTrfase_Trmb"/>
</dbReference>
<dbReference type="InterPro" id="IPR055361">
    <property type="entry name" value="tRNA_methyltr_TrmB_bact"/>
</dbReference>
<dbReference type="NCBIfam" id="NF001080">
    <property type="entry name" value="PRK00121.2-2"/>
    <property type="match status" value="1"/>
</dbReference>
<dbReference type="NCBIfam" id="TIGR00091">
    <property type="entry name" value="tRNA (guanosine(46)-N7)-methyltransferase TrmB"/>
    <property type="match status" value="1"/>
</dbReference>
<dbReference type="PANTHER" id="PTHR23417">
    <property type="entry name" value="3-DEOXY-D-MANNO-OCTULOSONIC-ACID TRANSFERASE/TRNA GUANINE-N 7 - -METHYLTRANSFERASE"/>
    <property type="match status" value="1"/>
</dbReference>
<dbReference type="PANTHER" id="PTHR23417:SF14">
    <property type="entry name" value="PENTACOTRIPEPTIDE-REPEAT REGION OF PRORP DOMAIN-CONTAINING PROTEIN"/>
    <property type="match status" value="1"/>
</dbReference>
<dbReference type="Pfam" id="PF02390">
    <property type="entry name" value="Methyltransf_4"/>
    <property type="match status" value="1"/>
</dbReference>
<dbReference type="SUPFAM" id="SSF53335">
    <property type="entry name" value="S-adenosyl-L-methionine-dependent methyltransferases"/>
    <property type="match status" value="1"/>
</dbReference>
<dbReference type="PROSITE" id="PS51625">
    <property type="entry name" value="SAM_MT_TRMB"/>
    <property type="match status" value="1"/>
</dbReference>
<reference key="1">
    <citation type="journal article" date="2009" name="BMC Genomics">
        <title>Genome evolution driven by host adaptations results in a more virulent and antimicrobial-resistant Streptococcus pneumoniae serotype 14.</title>
        <authorList>
            <person name="Ding F."/>
            <person name="Tang P."/>
            <person name="Hsu M.-H."/>
            <person name="Cui P."/>
            <person name="Hu S."/>
            <person name="Yu J."/>
            <person name="Chiu C.-H."/>
        </authorList>
    </citation>
    <scope>NUCLEOTIDE SEQUENCE [LARGE SCALE GENOMIC DNA]</scope>
    <source>
        <strain>CGSP14</strain>
    </source>
</reference>
<keyword id="KW-0489">Methyltransferase</keyword>
<keyword id="KW-0949">S-adenosyl-L-methionine</keyword>
<keyword id="KW-0808">Transferase</keyword>
<keyword id="KW-0819">tRNA processing</keyword>
<accession>B2IMD9</accession>
<name>TRMB_STRPS</name>
<feature type="chain" id="PRO_1000136371" description="tRNA (guanine-N(7)-)-methyltransferase">
    <location>
        <begin position="1"/>
        <end position="211"/>
    </location>
</feature>
<feature type="region of interest" description="Interaction with RNA" evidence="2">
    <location>
        <begin position="124"/>
        <end position="129"/>
    </location>
</feature>
<feature type="active site" evidence="1">
    <location>
        <position position="118"/>
    </location>
</feature>
<feature type="binding site" evidence="2">
    <location>
        <position position="44"/>
    </location>
    <ligand>
        <name>S-adenosyl-L-methionine</name>
        <dbReference type="ChEBI" id="CHEBI:59789"/>
    </ligand>
</feature>
<feature type="binding site" evidence="2">
    <location>
        <position position="69"/>
    </location>
    <ligand>
        <name>S-adenosyl-L-methionine</name>
        <dbReference type="ChEBI" id="CHEBI:59789"/>
    </ligand>
</feature>
<feature type="binding site" evidence="2">
    <location>
        <position position="96"/>
    </location>
    <ligand>
        <name>S-adenosyl-L-methionine</name>
        <dbReference type="ChEBI" id="CHEBI:59789"/>
    </ligand>
</feature>
<feature type="binding site" evidence="2">
    <location>
        <position position="118"/>
    </location>
    <ligand>
        <name>S-adenosyl-L-methionine</name>
        <dbReference type="ChEBI" id="CHEBI:59789"/>
    </ligand>
</feature>
<feature type="binding site" evidence="2">
    <location>
        <position position="122"/>
    </location>
    <ligand>
        <name>substrate</name>
    </ligand>
</feature>
<feature type="binding site" evidence="2">
    <location>
        <position position="154"/>
    </location>
    <ligand>
        <name>substrate</name>
    </ligand>
</feature>
<feature type="binding site" evidence="2">
    <location>
        <begin position="191"/>
        <end position="194"/>
    </location>
    <ligand>
        <name>substrate</name>
    </ligand>
</feature>
<gene>
    <name evidence="2" type="primary">trmB</name>
    <name type="ordered locus">SPCG_0514</name>
</gene>
<comment type="function">
    <text evidence="2">Catalyzes the formation of N(7)-methylguanine at position 46 (m7G46) in tRNA.</text>
</comment>
<comment type="catalytic activity">
    <reaction evidence="2">
        <text>guanosine(46) in tRNA + S-adenosyl-L-methionine = N(7)-methylguanosine(46) in tRNA + S-adenosyl-L-homocysteine</text>
        <dbReference type="Rhea" id="RHEA:42708"/>
        <dbReference type="Rhea" id="RHEA-COMP:10188"/>
        <dbReference type="Rhea" id="RHEA-COMP:10189"/>
        <dbReference type="ChEBI" id="CHEBI:57856"/>
        <dbReference type="ChEBI" id="CHEBI:59789"/>
        <dbReference type="ChEBI" id="CHEBI:74269"/>
        <dbReference type="ChEBI" id="CHEBI:74480"/>
        <dbReference type="EC" id="2.1.1.33"/>
    </reaction>
</comment>
<comment type="pathway">
    <text evidence="2">tRNA modification; N(7)-methylguanine-tRNA biosynthesis.</text>
</comment>
<comment type="similarity">
    <text evidence="2">Belongs to the class I-like SAM-binding methyltransferase superfamily. TrmB family.</text>
</comment>